<accession>P0C201</accession>
<evidence type="ECO:0000255" key="1"/>
<evidence type="ECO:0000269" key="2">
    <source>
    </source>
</evidence>
<evidence type="ECO:0000269" key="3">
    <source>
    </source>
</evidence>
<evidence type="ECO:0000303" key="4">
    <source>
    </source>
</evidence>
<evidence type="ECO:0000303" key="5">
    <source>
    </source>
</evidence>
<evidence type="ECO:0000305" key="6"/>
<evidence type="ECO:0000305" key="7">
    <source>
    </source>
</evidence>
<evidence type="ECO:0000312" key="8">
    <source>
        <dbReference type="PDB" id="1X5V"/>
    </source>
</evidence>
<evidence type="ECO:0007829" key="9">
    <source>
        <dbReference type="PDB" id="1X5V"/>
    </source>
</evidence>
<sequence>MMRVLIVTAVFTFFLVLTSSGHDEDNEQRNILEGMFLDRAIETPKGLEEKRACGILHDNCVYVPAQNPCCRGLQCRYGKCLVQVGR</sequence>
<comment type="function">
    <text evidence="2">Possesses strong antiplasmodial activity against the intra-erythrocyte stage of P.falciparum in vitro. IC(50) for inhibiting P.falciparum growth is 1.59 uM. Interacts with infected and healthy erythrocytes. Does not lyse erythrocytes, is not cytotoxic to nucleated mammalian cells, and does not inhibit neuromuscular function. Has neither antibacterial nor antifungal activity.</text>
</comment>
<comment type="subcellular location">
    <subcellularLocation>
        <location evidence="2">Secreted</location>
    </subcellularLocation>
</comment>
<comment type="tissue specificity">
    <text evidence="7">Expressed by the venom gland.</text>
</comment>
<comment type="domain">
    <text evidence="3">The presence of a 'disulfide through disulfide knot' structurally defines this protein as a knottin.</text>
</comment>
<comment type="mass spectrometry"/>
<comment type="similarity">
    <text>Belongs to the neurotoxin 10 (Hwtx-1) family.</text>
</comment>
<feature type="signal peptide" evidence="1">
    <location>
        <begin position="1"/>
        <end position="21"/>
    </location>
</feature>
<feature type="propeptide" id="PRO_0000256694" evidence="7">
    <location>
        <begin position="22"/>
        <end position="49"/>
    </location>
</feature>
<feature type="chain" id="PRO_0000256695" description="U1-theraphotoxin-Pc1a" evidence="7">
    <location>
        <begin position="52"/>
        <end position="84"/>
    </location>
</feature>
<feature type="modified residue" description="Valine amide" evidence="2">
    <location>
        <position position="84"/>
    </location>
</feature>
<feature type="disulfide bond" evidence="3 8">
    <location>
        <begin position="53"/>
        <end position="70"/>
    </location>
</feature>
<feature type="disulfide bond" evidence="3 8">
    <location>
        <begin position="60"/>
        <end position="75"/>
    </location>
</feature>
<feature type="disulfide bond" evidence="3 8">
    <location>
        <begin position="69"/>
        <end position="80"/>
    </location>
</feature>
<feature type="helix" evidence="9">
    <location>
        <begin position="64"/>
        <end position="66"/>
    </location>
</feature>
<feature type="strand" evidence="9">
    <location>
        <begin position="73"/>
        <end position="76"/>
    </location>
</feature>
<feature type="strand" evidence="9">
    <location>
        <begin position="78"/>
        <end position="82"/>
    </location>
</feature>
<protein>
    <recommendedName>
        <fullName evidence="6">U1-theraphotoxin-Pc1a</fullName>
        <shortName evidence="6">U1-TRTX-Pc1a</shortName>
    </recommendedName>
    <alternativeName>
        <fullName evidence="4">Psalmopeotoxin I</fullName>
    </alternativeName>
    <alternativeName>
        <fullName evidence="6">Psalmopeotoxin-1</fullName>
    </alternativeName>
    <alternativeName>
        <fullName evidence="5">Psalmopoeus cambridgei Falciparum killer 1</fullName>
        <shortName evidence="5">PcFK1</shortName>
    </alternativeName>
</protein>
<organism>
    <name type="scientific">Psalmopoeus cambridgei</name>
    <name type="common">Trinidad chevron tarantula</name>
    <dbReference type="NCBI Taxonomy" id="179874"/>
    <lineage>
        <taxon>Eukaryota</taxon>
        <taxon>Metazoa</taxon>
        <taxon>Ecdysozoa</taxon>
        <taxon>Arthropoda</taxon>
        <taxon>Chelicerata</taxon>
        <taxon>Arachnida</taxon>
        <taxon>Araneae</taxon>
        <taxon>Mygalomorphae</taxon>
        <taxon>Theraphosidae</taxon>
        <taxon>Psalmopoeus</taxon>
    </lineage>
</organism>
<keyword id="KW-0002">3D-structure</keyword>
<keyword id="KW-0027">Amidation</keyword>
<keyword id="KW-0165">Cleavage on pair of basic residues</keyword>
<keyword id="KW-0903">Direct protein sequencing</keyword>
<keyword id="KW-1015">Disulfide bond</keyword>
<keyword id="KW-0960">Knottin</keyword>
<keyword id="KW-0964">Secreted</keyword>
<keyword id="KW-0732">Signal</keyword>
<keyword id="KW-0800">Toxin</keyword>
<reference key="1">
    <citation type="journal article" date="2004" name="FEBS Lett.">
        <title>Isolation and characterization of Psalmopeotoxin I and II: two novel antimalarial peptides from the venom of the tarantula Psalmopoeus cambridgei.</title>
        <authorList>
            <person name="Choi S.-J."/>
            <person name="Parent R."/>
            <person name="Guillaume C."/>
            <person name="Deregnaucourt C."/>
            <person name="Delarbre C."/>
            <person name="Ojcius D.M."/>
            <person name="Montagne J.-J."/>
            <person name="Celerier M.-L."/>
            <person name="Phelipot A."/>
            <person name="Amiche M."/>
            <person name="Molgo J."/>
            <person name="Camadro J.-M."/>
            <person name="Guette C."/>
        </authorList>
    </citation>
    <scope>NUCLEOTIDE SEQUENCE [MRNA]</scope>
    <scope>PARTIAL PROTEIN SEQUENCE</scope>
    <scope>FUNCTION</scope>
    <scope>AMIDATION AT VAL-84</scope>
    <scope>MASS SPECTROMETRY</scope>
    <scope>SUBCELLULAR LOCATION</scope>
    <source>
        <tissue>Venom</tissue>
        <tissue>Venom gland</tissue>
    </source>
</reference>
<reference key="2">
    <citation type="journal article" date="2006" name="Protein Sci.">
        <title>Solution structure of PcFK1, a spider peptide active against Plasmodium falciparum.</title>
        <authorList>
            <person name="Pimentel C."/>
            <person name="Choi S.-J."/>
            <person name="Chagot B."/>
            <person name="Guette C."/>
            <person name="Camadro J.-M."/>
            <person name="Darbon H."/>
        </authorList>
    </citation>
    <scope>STRUCTURE BY NMR OF 52-86</scope>
    <scope>DISULFIDE BONDS</scope>
    <source>
        <tissue>Venom</tissue>
    </source>
</reference>
<proteinExistence type="evidence at protein level"/>
<dbReference type="PDB" id="1X5V">
    <property type="method" value="NMR"/>
    <property type="chains" value="A=52-84"/>
</dbReference>
<dbReference type="PDBsum" id="1X5V"/>
<dbReference type="BMRB" id="P0C201"/>
<dbReference type="SMR" id="P0C201"/>
<dbReference type="ArachnoServer" id="AS000318">
    <property type="toxin name" value="U1-theraphotoxin-Pc1a"/>
</dbReference>
<dbReference type="GO" id="GO:0005576">
    <property type="term" value="C:extracellular region"/>
    <property type="evidence" value="ECO:0007669"/>
    <property type="project" value="UniProtKB-SubCell"/>
</dbReference>
<dbReference type="GO" id="GO:0090729">
    <property type="term" value="F:toxin activity"/>
    <property type="evidence" value="ECO:0007669"/>
    <property type="project" value="UniProtKB-KW"/>
</dbReference>
<name>NTA_PSACA</name>